<protein>
    <recommendedName>
        <fullName>Phosphate regulon transcriptional regulatory protein PhoB</fullName>
    </recommendedName>
</protein>
<keyword id="KW-0002">3D-structure</keyword>
<keyword id="KW-0010">Activator</keyword>
<keyword id="KW-0963">Cytoplasm</keyword>
<keyword id="KW-0238">DNA-binding</keyword>
<keyword id="KW-0592">Phosphate transport</keyword>
<keyword id="KW-0597">Phosphoprotein</keyword>
<keyword id="KW-1185">Reference proteome</keyword>
<keyword id="KW-0804">Transcription</keyword>
<keyword id="KW-0805">Transcription regulation</keyword>
<keyword id="KW-0813">Transport</keyword>
<keyword id="KW-0902">Two-component regulatory system</keyword>
<organism>
    <name type="scientific">Escherichia coli (strain K12)</name>
    <dbReference type="NCBI Taxonomy" id="83333"/>
    <lineage>
        <taxon>Bacteria</taxon>
        <taxon>Pseudomonadati</taxon>
        <taxon>Pseudomonadota</taxon>
        <taxon>Gammaproteobacteria</taxon>
        <taxon>Enterobacterales</taxon>
        <taxon>Enterobacteriaceae</taxon>
        <taxon>Escherichia</taxon>
    </lineage>
</organism>
<proteinExistence type="evidence at protein level"/>
<sequence>MARRILVVEDEAPIREMVCFVLEQNGFQPVEAEDYDSAVNQLNEPWPDLILLDWMLPGGSGIQFIKHLKRESMTRDIPVVMLTARGEEEDRVRGLETGADDYITKPFSPKELVARIKAVMRRISPMAVEEVIEMQGLSLDPTSHRVMAGEEPLEMGPTEFKLLHFFMTHPERVYSREQLLNHVWGTNVYVEDRTVDVHIRRLRKALEPGGHDRMVQTVRGTGYRFSTRF</sequence>
<reference key="1">
    <citation type="journal article" date="1986" name="J. Mol. Biol.">
        <title>Nucleotide sequence of the phoB gene, the positive regulatory gene for the phosphate regulon of Escherichia coli K-12.</title>
        <authorList>
            <person name="Makino K."/>
            <person name="Shinagawa H."/>
            <person name="Amemura M."/>
            <person name="Nakata A."/>
        </authorList>
    </citation>
    <scope>NUCLEOTIDE SEQUENCE [GENOMIC DNA]</scope>
    <source>
        <strain>K12</strain>
    </source>
</reference>
<reference key="2">
    <citation type="submission" date="1997-01" db="EMBL/GenBank/DDBJ databases">
        <title>Sequence of minutes 4-25 of Escherichia coli.</title>
        <authorList>
            <person name="Chung E."/>
            <person name="Allen E."/>
            <person name="Araujo R."/>
            <person name="Aparicio A.M."/>
            <person name="Davis K."/>
            <person name="Duncan M."/>
            <person name="Federspiel N."/>
            <person name="Hyman R."/>
            <person name="Kalman S."/>
            <person name="Komp C."/>
            <person name="Kurdi O."/>
            <person name="Lew H."/>
            <person name="Lin D."/>
            <person name="Namath A."/>
            <person name="Oefner P."/>
            <person name="Roberts D."/>
            <person name="Schramm S."/>
            <person name="Davis R.W."/>
        </authorList>
    </citation>
    <scope>NUCLEOTIDE SEQUENCE [LARGE SCALE GENOMIC DNA]</scope>
    <source>
        <strain>K12 / MG1655 / ATCC 47076</strain>
    </source>
</reference>
<reference key="3">
    <citation type="journal article" date="1997" name="Science">
        <title>The complete genome sequence of Escherichia coli K-12.</title>
        <authorList>
            <person name="Blattner F.R."/>
            <person name="Plunkett G. III"/>
            <person name="Bloch C.A."/>
            <person name="Perna N.T."/>
            <person name="Burland V."/>
            <person name="Riley M."/>
            <person name="Collado-Vides J."/>
            <person name="Glasner J.D."/>
            <person name="Rode C.K."/>
            <person name="Mayhew G.F."/>
            <person name="Gregor J."/>
            <person name="Davis N.W."/>
            <person name="Kirkpatrick H.A."/>
            <person name="Goeden M.A."/>
            <person name="Rose D.J."/>
            <person name="Mau B."/>
            <person name="Shao Y."/>
        </authorList>
    </citation>
    <scope>NUCLEOTIDE SEQUENCE [LARGE SCALE GENOMIC DNA]</scope>
    <source>
        <strain>K12 / MG1655 / ATCC 47076</strain>
    </source>
</reference>
<reference key="4">
    <citation type="journal article" date="2006" name="Mol. Syst. Biol.">
        <title>Highly accurate genome sequences of Escherichia coli K-12 strains MG1655 and W3110.</title>
        <authorList>
            <person name="Hayashi K."/>
            <person name="Morooka N."/>
            <person name="Yamamoto Y."/>
            <person name="Fujita K."/>
            <person name="Isono K."/>
            <person name="Choi S."/>
            <person name="Ohtsubo E."/>
            <person name="Baba T."/>
            <person name="Wanner B.L."/>
            <person name="Mori H."/>
            <person name="Horiuchi T."/>
        </authorList>
    </citation>
    <scope>NUCLEOTIDE SEQUENCE [LARGE SCALE GENOMIC DNA]</scope>
    <source>
        <strain>K12 / W3110 / ATCC 27325 / DSM 5911</strain>
    </source>
</reference>
<reference key="5">
    <citation type="journal article" date="1999" name="J. Mol. Biol.">
        <title>Three-dimensional crystal structure of the transcription factor PhoB receiver domain.</title>
        <authorList>
            <person name="Sola M."/>
            <person name="Gomis-Rueth F.-X."/>
            <person name="Serrano L."/>
            <person name="Gonzalez A."/>
            <person name="Coll M."/>
        </authorList>
    </citation>
    <scope>X-RAY CRYSTALLOGRAPHY (1.9 ANGSTROMS) OF 1-126</scope>
    <scope>PHOSPHORYLATION AT ASP-53</scope>
</reference>
<reference key="6">
    <citation type="journal article" date="2000" name="J. Mol. Biol.">
        <title>Structural comparison of the PhoB and OmpR DNA-binding/transactivation domains and the arrangement of PhoB molecules on the phosphate box.</title>
        <authorList>
            <person name="Okamura H."/>
            <person name="Hanaoka S."/>
            <person name="Nagadoi A."/>
            <person name="Makino K."/>
            <person name="Nishimura Y."/>
        </authorList>
    </citation>
    <scope>STRUCTURE BY NMR OF 126-229</scope>
</reference>
<comment type="function">
    <text>This protein is a positive regulator for the phosphate regulon. Transcription of this operon is positively regulated by PhoB and PhoR when phosphate is limited.</text>
</comment>
<comment type="interaction">
    <interactant intactId="EBI-1116564">
        <id>P0AFJ5</id>
    </interactant>
    <interactant intactId="EBI-1116564">
        <id>P0AFJ5</id>
        <label>phoB</label>
    </interactant>
    <organismsDiffer>false</organismsDiffer>
    <experiments>9</experiments>
</comment>
<comment type="subcellular location">
    <subcellularLocation>
        <location>Cytoplasm</location>
    </subcellularLocation>
</comment>
<comment type="PTM">
    <text evidence="3">Phosphorylated by PhoR or CreC.</text>
</comment>
<evidence type="ECO:0000255" key="1">
    <source>
        <dbReference type="PROSITE-ProRule" id="PRU00169"/>
    </source>
</evidence>
<evidence type="ECO:0000255" key="2">
    <source>
        <dbReference type="PROSITE-ProRule" id="PRU01091"/>
    </source>
</evidence>
<evidence type="ECO:0000269" key="3">
    <source>
    </source>
</evidence>
<evidence type="ECO:0007829" key="4">
    <source>
        <dbReference type="PDB" id="1GXP"/>
    </source>
</evidence>
<evidence type="ECO:0007829" key="5">
    <source>
        <dbReference type="PDB" id="1GXQ"/>
    </source>
</evidence>
<evidence type="ECO:0007829" key="6">
    <source>
        <dbReference type="PDB" id="2IYN"/>
    </source>
</evidence>
<evidence type="ECO:0007829" key="7">
    <source>
        <dbReference type="PDB" id="2JBA"/>
    </source>
</evidence>
<accession>P0AFJ5</accession>
<accession>P08402</accession>
<accession>Q2MC27</accession>
<name>PHOB_ECOLI</name>
<dbReference type="EMBL" id="X04026">
    <property type="protein sequence ID" value="CAA27659.1"/>
    <property type="molecule type" value="Genomic_DNA"/>
</dbReference>
<dbReference type="EMBL" id="U73857">
    <property type="protein sequence ID" value="AAB18123.1"/>
    <property type="molecule type" value="Genomic_DNA"/>
</dbReference>
<dbReference type="EMBL" id="U00096">
    <property type="protein sequence ID" value="AAC73502.1"/>
    <property type="molecule type" value="Genomic_DNA"/>
</dbReference>
<dbReference type="EMBL" id="AP009048">
    <property type="protein sequence ID" value="BAE76179.1"/>
    <property type="molecule type" value="Genomic_DNA"/>
</dbReference>
<dbReference type="PIR" id="A24256">
    <property type="entry name" value="RGECFB"/>
</dbReference>
<dbReference type="RefSeq" id="NP_414933.1">
    <property type="nucleotide sequence ID" value="NC_000913.3"/>
</dbReference>
<dbReference type="RefSeq" id="WP_000113933.1">
    <property type="nucleotide sequence ID" value="NZ_STEB01000007.1"/>
</dbReference>
<dbReference type="PDB" id="1B00">
    <property type="method" value="X-ray"/>
    <property type="resolution" value="1.88 A"/>
    <property type="chains" value="A/B=1-127"/>
</dbReference>
<dbReference type="PDB" id="1GXP">
    <property type="method" value="X-ray"/>
    <property type="resolution" value="2.50 A"/>
    <property type="chains" value="A/B/E/F=124-229"/>
</dbReference>
<dbReference type="PDB" id="1GXQ">
    <property type="method" value="X-ray"/>
    <property type="resolution" value="2.00 A"/>
    <property type="chains" value="A=124-229"/>
</dbReference>
<dbReference type="PDB" id="1QQI">
    <property type="method" value="NMR"/>
    <property type="chains" value="A=126-229"/>
</dbReference>
<dbReference type="PDB" id="1ZES">
    <property type="method" value="X-ray"/>
    <property type="resolution" value="1.90 A"/>
    <property type="chains" value="A/B/C=1-125"/>
</dbReference>
<dbReference type="PDB" id="2IYN">
    <property type="method" value="X-ray"/>
    <property type="resolution" value="2.08 A"/>
    <property type="chains" value="A/B/C=1-127"/>
</dbReference>
<dbReference type="PDB" id="2JB9">
    <property type="method" value="X-ray"/>
    <property type="resolution" value="1.70 A"/>
    <property type="chains" value="A/B=1-127"/>
</dbReference>
<dbReference type="PDB" id="2JBA">
    <property type="method" value="X-ray"/>
    <property type="resolution" value="1.45 A"/>
    <property type="chains" value="A/B=1-127"/>
</dbReference>
<dbReference type="PDB" id="2Z33">
    <property type="method" value="NMR"/>
    <property type="chains" value="A=126-229"/>
</dbReference>
<dbReference type="PDB" id="3T72">
    <property type="method" value="X-ray"/>
    <property type="resolution" value="4.33 A"/>
    <property type="chains" value="1/4/5/8/9/A/B/E/F/I/J/M/N/R/S/V/W/Z/c/d/g/h/k/l=128-229"/>
</dbReference>
<dbReference type="PDBsum" id="1B00"/>
<dbReference type="PDBsum" id="1GXP"/>
<dbReference type="PDBsum" id="1GXQ"/>
<dbReference type="PDBsum" id="1QQI"/>
<dbReference type="PDBsum" id="1ZES"/>
<dbReference type="PDBsum" id="2IYN"/>
<dbReference type="PDBsum" id="2JB9"/>
<dbReference type="PDBsum" id="2JBA"/>
<dbReference type="PDBsum" id="2Z33"/>
<dbReference type="PDBsum" id="3T72"/>
<dbReference type="BMRB" id="P0AFJ5"/>
<dbReference type="SMR" id="P0AFJ5"/>
<dbReference type="BioGRID" id="4259816">
    <property type="interactions" value="185"/>
</dbReference>
<dbReference type="BioGRID" id="849435">
    <property type="interactions" value="5"/>
</dbReference>
<dbReference type="DIP" id="DIP-35852N"/>
<dbReference type="FunCoup" id="P0AFJ5">
    <property type="interactions" value="572"/>
</dbReference>
<dbReference type="IntAct" id="P0AFJ5">
    <property type="interactions" value="24"/>
</dbReference>
<dbReference type="STRING" id="511145.b0399"/>
<dbReference type="jPOST" id="P0AFJ5"/>
<dbReference type="PaxDb" id="511145-b0399"/>
<dbReference type="EnsemblBacteria" id="AAC73502">
    <property type="protein sequence ID" value="AAC73502"/>
    <property type="gene ID" value="b0399"/>
</dbReference>
<dbReference type="GeneID" id="93777061"/>
<dbReference type="GeneID" id="945046"/>
<dbReference type="KEGG" id="ecj:JW0389"/>
<dbReference type="KEGG" id="eco:b0399"/>
<dbReference type="KEGG" id="ecoc:C3026_01940"/>
<dbReference type="PATRIC" id="fig|1411691.4.peg.1879"/>
<dbReference type="EchoBASE" id="EB0721"/>
<dbReference type="eggNOG" id="COG0745">
    <property type="taxonomic scope" value="Bacteria"/>
</dbReference>
<dbReference type="HOGENOM" id="CLU_000445_30_4_6"/>
<dbReference type="InParanoid" id="P0AFJ5"/>
<dbReference type="OMA" id="MDVDRHT"/>
<dbReference type="OrthoDB" id="9802426at2"/>
<dbReference type="PhylomeDB" id="P0AFJ5"/>
<dbReference type="BioCyc" id="EcoCyc:PHOB-MONOMER"/>
<dbReference type="EvolutionaryTrace" id="P0AFJ5"/>
<dbReference type="PRO" id="PR:P0AFJ5"/>
<dbReference type="Proteomes" id="UP000000625">
    <property type="component" value="Chromosome"/>
</dbReference>
<dbReference type="GO" id="GO:0005829">
    <property type="term" value="C:cytosol"/>
    <property type="evidence" value="ECO:0000318"/>
    <property type="project" value="GO_Central"/>
</dbReference>
<dbReference type="GO" id="GO:0032993">
    <property type="term" value="C:protein-DNA complex"/>
    <property type="evidence" value="ECO:0000318"/>
    <property type="project" value="GO_Central"/>
</dbReference>
<dbReference type="GO" id="GO:0001108">
    <property type="term" value="F:bacterial-type RNA polymerase holo enzyme binding"/>
    <property type="evidence" value="ECO:0000315"/>
    <property type="project" value="EcoCyc"/>
</dbReference>
<dbReference type="GO" id="GO:0042802">
    <property type="term" value="F:identical protein binding"/>
    <property type="evidence" value="ECO:0000353"/>
    <property type="project" value="IntAct"/>
</dbReference>
<dbReference type="GO" id="GO:0000156">
    <property type="term" value="F:phosphorelay response regulator activity"/>
    <property type="evidence" value="ECO:0000318"/>
    <property type="project" value="GO_Central"/>
</dbReference>
<dbReference type="GO" id="GO:0000976">
    <property type="term" value="F:transcription cis-regulatory region binding"/>
    <property type="evidence" value="ECO:0000318"/>
    <property type="project" value="GO_Central"/>
</dbReference>
<dbReference type="GO" id="GO:0006817">
    <property type="term" value="P:phosphate ion transport"/>
    <property type="evidence" value="ECO:0007669"/>
    <property type="project" value="UniProtKB-KW"/>
</dbReference>
<dbReference type="GO" id="GO:0006355">
    <property type="term" value="P:regulation of DNA-templated transcription"/>
    <property type="evidence" value="ECO:0000318"/>
    <property type="project" value="GO_Central"/>
</dbReference>
<dbReference type="GO" id="GO:2000142">
    <property type="term" value="P:regulation of DNA-templated transcription initiation"/>
    <property type="evidence" value="ECO:0000314"/>
    <property type="project" value="EcoCyc"/>
</dbReference>
<dbReference type="CDD" id="cd17618">
    <property type="entry name" value="REC_OmpR_PhoB"/>
    <property type="match status" value="1"/>
</dbReference>
<dbReference type="CDD" id="cd00383">
    <property type="entry name" value="trans_reg_C"/>
    <property type="match status" value="1"/>
</dbReference>
<dbReference type="FunFam" id="3.40.50.2300:FF:000001">
    <property type="entry name" value="DNA-binding response regulator PhoB"/>
    <property type="match status" value="1"/>
</dbReference>
<dbReference type="FunFam" id="1.10.10.10:FF:000011">
    <property type="entry name" value="Phosphate regulon transcriptional regulator PhoB"/>
    <property type="match status" value="1"/>
</dbReference>
<dbReference type="Gene3D" id="3.40.50.2300">
    <property type="match status" value="1"/>
</dbReference>
<dbReference type="Gene3D" id="6.10.250.690">
    <property type="match status" value="1"/>
</dbReference>
<dbReference type="Gene3D" id="1.10.10.10">
    <property type="entry name" value="Winged helix-like DNA-binding domain superfamily/Winged helix DNA-binding domain"/>
    <property type="match status" value="1"/>
</dbReference>
<dbReference type="InterPro" id="IPR011006">
    <property type="entry name" value="CheY-like_superfamily"/>
</dbReference>
<dbReference type="InterPro" id="IPR001867">
    <property type="entry name" value="OmpR/PhoB-type_DNA-bd"/>
</dbReference>
<dbReference type="InterPro" id="IPR011879">
    <property type="entry name" value="Sig_transdc_resp-reg_PhoB"/>
</dbReference>
<dbReference type="InterPro" id="IPR001789">
    <property type="entry name" value="Sig_transdc_resp-reg_receiver"/>
</dbReference>
<dbReference type="InterPro" id="IPR039420">
    <property type="entry name" value="WalR-like"/>
</dbReference>
<dbReference type="InterPro" id="IPR036388">
    <property type="entry name" value="WH-like_DNA-bd_sf"/>
</dbReference>
<dbReference type="NCBIfam" id="TIGR02154">
    <property type="entry name" value="PhoB"/>
    <property type="match status" value="1"/>
</dbReference>
<dbReference type="NCBIfam" id="NF007546">
    <property type="entry name" value="PRK10161.1"/>
    <property type="match status" value="1"/>
</dbReference>
<dbReference type="PANTHER" id="PTHR48111:SF40">
    <property type="entry name" value="PHOSPHATE REGULON TRANSCRIPTIONAL REGULATORY PROTEIN PHOB"/>
    <property type="match status" value="1"/>
</dbReference>
<dbReference type="PANTHER" id="PTHR48111">
    <property type="entry name" value="REGULATOR OF RPOS"/>
    <property type="match status" value="1"/>
</dbReference>
<dbReference type="Pfam" id="PF00072">
    <property type="entry name" value="Response_reg"/>
    <property type="match status" value="1"/>
</dbReference>
<dbReference type="Pfam" id="PF00486">
    <property type="entry name" value="Trans_reg_C"/>
    <property type="match status" value="1"/>
</dbReference>
<dbReference type="SMART" id="SM00448">
    <property type="entry name" value="REC"/>
    <property type="match status" value="1"/>
</dbReference>
<dbReference type="SMART" id="SM00862">
    <property type="entry name" value="Trans_reg_C"/>
    <property type="match status" value="1"/>
</dbReference>
<dbReference type="SUPFAM" id="SSF52172">
    <property type="entry name" value="CheY-like"/>
    <property type="match status" value="1"/>
</dbReference>
<dbReference type="PROSITE" id="PS51755">
    <property type="entry name" value="OMPR_PHOB"/>
    <property type="match status" value="1"/>
</dbReference>
<dbReference type="PROSITE" id="PS50110">
    <property type="entry name" value="RESPONSE_REGULATORY"/>
    <property type="match status" value="1"/>
</dbReference>
<gene>
    <name type="primary">phoB</name>
    <name type="ordered locus">b0399</name>
    <name type="ordered locus">JW0389</name>
</gene>
<feature type="chain" id="PRO_0000081186" description="Phosphate regulon transcriptional regulatory protein PhoB">
    <location>
        <begin position="1"/>
        <end position="229"/>
    </location>
</feature>
<feature type="domain" description="Response regulatory" evidence="1">
    <location>
        <begin position="4"/>
        <end position="120"/>
    </location>
</feature>
<feature type="DNA-binding region" description="OmpR/PhoB-type" evidence="2">
    <location>
        <begin position="129"/>
        <end position="227"/>
    </location>
</feature>
<feature type="modified residue" description="4-aspartylphosphate" evidence="1 3">
    <location>
        <position position="53"/>
    </location>
</feature>
<feature type="strand" evidence="7">
    <location>
        <begin position="4"/>
        <end position="8"/>
    </location>
</feature>
<feature type="helix" evidence="7">
    <location>
        <begin position="12"/>
        <end position="24"/>
    </location>
</feature>
<feature type="strand" evidence="7">
    <location>
        <begin position="28"/>
        <end position="32"/>
    </location>
</feature>
<feature type="helix" evidence="7">
    <location>
        <begin position="35"/>
        <end position="39"/>
    </location>
</feature>
<feature type="strand" evidence="7">
    <location>
        <begin position="43"/>
        <end position="45"/>
    </location>
</feature>
<feature type="strand" evidence="7">
    <location>
        <begin position="48"/>
        <end position="56"/>
    </location>
</feature>
<feature type="helix" evidence="7">
    <location>
        <begin position="61"/>
        <end position="69"/>
    </location>
</feature>
<feature type="turn" evidence="7">
    <location>
        <begin position="72"/>
        <end position="76"/>
    </location>
</feature>
<feature type="strand" evidence="7">
    <location>
        <begin position="79"/>
        <end position="84"/>
    </location>
</feature>
<feature type="helix" evidence="7">
    <location>
        <begin position="87"/>
        <end position="92"/>
    </location>
</feature>
<feature type="strand" evidence="6">
    <location>
        <begin position="93"/>
        <end position="95"/>
    </location>
</feature>
<feature type="strand" evidence="7">
    <location>
        <begin position="100"/>
        <end position="106"/>
    </location>
</feature>
<feature type="helix" evidence="7">
    <location>
        <begin position="109"/>
        <end position="121"/>
    </location>
</feature>
<feature type="strand" evidence="5">
    <location>
        <begin position="132"/>
        <end position="134"/>
    </location>
</feature>
<feature type="strand" evidence="5">
    <location>
        <begin position="137"/>
        <end position="140"/>
    </location>
</feature>
<feature type="turn" evidence="5">
    <location>
        <begin position="141"/>
        <end position="144"/>
    </location>
</feature>
<feature type="strand" evidence="5">
    <location>
        <begin position="145"/>
        <end position="148"/>
    </location>
</feature>
<feature type="strand" evidence="4">
    <location>
        <begin position="151"/>
        <end position="153"/>
    </location>
</feature>
<feature type="helix" evidence="5">
    <location>
        <begin position="157"/>
        <end position="168"/>
    </location>
</feature>
<feature type="strand" evidence="5">
    <location>
        <begin position="171"/>
        <end position="174"/>
    </location>
</feature>
<feature type="helix" evidence="5">
    <location>
        <begin position="176"/>
        <end position="183"/>
    </location>
</feature>
<feature type="strand" evidence="5">
    <location>
        <begin position="186"/>
        <end position="188"/>
    </location>
</feature>
<feature type="helix" evidence="5">
    <location>
        <begin position="193"/>
        <end position="206"/>
    </location>
</feature>
<feature type="helix" evidence="5">
    <location>
        <begin position="207"/>
        <end position="209"/>
    </location>
</feature>
<feature type="helix" evidence="5">
    <location>
        <begin position="211"/>
        <end position="214"/>
    </location>
</feature>
<feature type="strand" evidence="5">
    <location>
        <begin position="215"/>
        <end position="218"/>
    </location>
</feature>
<feature type="turn" evidence="5">
    <location>
        <begin position="219"/>
        <end position="221"/>
    </location>
</feature>
<feature type="strand" evidence="5">
    <location>
        <begin position="222"/>
        <end position="225"/>
    </location>
</feature>